<organism>
    <name type="scientific">Haloarcula marismortui (strain ATCC 43049 / DSM 3752 / JCM 8966 / VKM B-1809)</name>
    <name type="common">Halobacterium marismortui</name>
    <dbReference type="NCBI Taxonomy" id="272569"/>
    <lineage>
        <taxon>Archaea</taxon>
        <taxon>Methanobacteriati</taxon>
        <taxon>Methanobacteriota</taxon>
        <taxon>Stenosarchaea group</taxon>
        <taxon>Halobacteria</taxon>
        <taxon>Halobacteriales</taxon>
        <taxon>Haloarculaceae</taxon>
        <taxon>Haloarcula</taxon>
    </lineage>
</organism>
<protein>
    <recommendedName>
        <fullName evidence="1">Cytidylate kinase</fullName>
        <shortName evidence="1">CK</shortName>
        <ecNumber evidence="1">2.7.4.25</ecNumber>
    </recommendedName>
    <alternativeName>
        <fullName evidence="1">Cytidine monophosphate kinase</fullName>
        <shortName evidence="1">CMP kinase</shortName>
    </alternativeName>
</protein>
<sequence>MLITVSGPAGSGKSTLAKSLADALNYEHVSGGDIFRSLAEERGMTPLELNKAAEEDDQIDRDLDRKLRDIAAERDDLVLESRLAGWMAGEYADMKLWLTAPLDVRADRIATRENKPFEQAKTETRERGDSEAQRYSDYYDIDFDDLSIYDLSVNTARWDPQGVLSVTLHAVESYSPDGDEGKAPVENIRYEF</sequence>
<dbReference type="EC" id="2.7.4.25" evidence="1"/>
<dbReference type="EMBL" id="AY596297">
    <property type="protein sequence ID" value="AAV48033.1"/>
    <property type="molecule type" value="Genomic_DNA"/>
</dbReference>
<dbReference type="RefSeq" id="WP_011224745.1">
    <property type="nucleotide sequence ID" value="NZ_CP039138.1"/>
</dbReference>
<dbReference type="SMR" id="Q5UXH0"/>
<dbReference type="STRING" id="272569.rrnAC3343"/>
<dbReference type="PaxDb" id="272569-rrnAC3343"/>
<dbReference type="EnsemblBacteria" id="AAV48033">
    <property type="protein sequence ID" value="AAV48033"/>
    <property type="gene ID" value="rrnAC3343"/>
</dbReference>
<dbReference type="GeneID" id="40154138"/>
<dbReference type="KEGG" id="hma:rrnAC3343"/>
<dbReference type="PATRIC" id="fig|272569.17.peg.3869"/>
<dbReference type="eggNOG" id="arCOG01037">
    <property type="taxonomic scope" value="Archaea"/>
</dbReference>
<dbReference type="HOGENOM" id="CLU_079959_1_0_2"/>
<dbReference type="Proteomes" id="UP000001169">
    <property type="component" value="Chromosome I"/>
</dbReference>
<dbReference type="GO" id="GO:0005737">
    <property type="term" value="C:cytoplasm"/>
    <property type="evidence" value="ECO:0007669"/>
    <property type="project" value="UniProtKB-SubCell"/>
</dbReference>
<dbReference type="GO" id="GO:0005524">
    <property type="term" value="F:ATP binding"/>
    <property type="evidence" value="ECO:0007669"/>
    <property type="project" value="UniProtKB-UniRule"/>
</dbReference>
<dbReference type="GO" id="GO:0036430">
    <property type="term" value="F:CMP kinase activity"/>
    <property type="evidence" value="ECO:0007669"/>
    <property type="project" value="RHEA"/>
</dbReference>
<dbReference type="GO" id="GO:0036431">
    <property type="term" value="F:dCMP kinase activity"/>
    <property type="evidence" value="ECO:0007669"/>
    <property type="project" value="RHEA"/>
</dbReference>
<dbReference type="GO" id="GO:0006220">
    <property type="term" value="P:pyrimidine nucleotide metabolic process"/>
    <property type="evidence" value="ECO:0007669"/>
    <property type="project" value="UniProtKB-UniRule"/>
</dbReference>
<dbReference type="CDD" id="cd02020">
    <property type="entry name" value="CMPK"/>
    <property type="match status" value="1"/>
</dbReference>
<dbReference type="Gene3D" id="3.40.50.300">
    <property type="entry name" value="P-loop containing nucleotide triphosphate hydrolases"/>
    <property type="match status" value="1"/>
</dbReference>
<dbReference type="HAMAP" id="MF_00239">
    <property type="entry name" value="Cytidyl_kinase_type2"/>
    <property type="match status" value="1"/>
</dbReference>
<dbReference type="InterPro" id="IPR011892">
    <property type="entry name" value="Cyt_kin_arch"/>
</dbReference>
<dbReference type="InterPro" id="IPR011994">
    <property type="entry name" value="Cytidylate_kinase_dom"/>
</dbReference>
<dbReference type="InterPro" id="IPR027417">
    <property type="entry name" value="P-loop_NTPase"/>
</dbReference>
<dbReference type="NCBIfam" id="TIGR02173">
    <property type="entry name" value="cyt_kin_arch"/>
    <property type="match status" value="1"/>
</dbReference>
<dbReference type="Pfam" id="PF13189">
    <property type="entry name" value="Cytidylate_kin2"/>
    <property type="match status" value="1"/>
</dbReference>
<dbReference type="SUPFAM" id="SSF52540">
    <property type="entry name" value="P-loop containing nucleoside triphosphate hydrolases"/>
    <property type="match status" value="1"/>
</dbReference>
<gene>
    <name evidence="1" type="primary">cmk</name>
    <name type="ordered locus">rrnAC3343</name>
</gene>
<proteinExistence type="inferred from homology"/>
<name>KCY_HALMA</name>
<feature type="chain" id="PRO_0000132010" description="Cytidylate kinase">
    <location>
        <begin position="1"/>
        <end position="192"/>
    </location>
</feature>
<feature type="binding site" evidence="1">
    <location>
        <begin position="7"/>
        <end position="15"/>
    </location>
    <ligand>
        <name>ATP</name>
        <dbReference type="ChEBI" id="CHEBI:30616"/>
    </ligand>
</feature>
<evidence type="ECO:0000255" key="1">
    <source>
        <dbReference type="HAMAP-Rule" id="MF_00239"/>
    </source>
</evidence>
<comment type="catalytic activity">
    <reaction evidence="1">
        <text>CMP + ATP = CDP + ADP</text>
        <dbReference type="Rhea" id="RHEA:11600"/>
        <dbReference type="ChEBI" id="CHEBI:30616"/>
        <dbReference type="ChEBI" id="CHEBI:58069"/>
        <dbReference type="ChEBI" id="CHEBI:60377"/>
        <dbReference type="ChEBI" id="CHEBI:456216"/>
        <dbReference type="EC" id="2.7.4.25"/>
    </reaction>
</comment>
<comment type="catalytic activity">
    <reaction evidence="1">
        <text>dCMP + ATP = dCDP + ADP</text>
        <dbReference type="Rhea" id="RHEA:25094"/>
        <dbReference type="ChEBI" id="CHEBI:30616"/>
        <dbReference type="ChEBI" id="CHEBI:57566"/>
        <dbReference type="ChEBI" id="CHEBI:58593"/>
        <dbReference type="ChEBI" id="CHEBI:456216"/>
        <dbReference type="EC" id="2.7.4.25"/>
    </reaction>
</comment>
<comment type="subcellular location">
    <subcellularLocation>
        <location evidence="1">Cytoplasm</location>
    </subcellularLocation>
</comment>
<comment type="similarity">
    <text evidence="1">Belongs to the cytidylate kinase family. Type 2 subfamily.</text>
</comment>
<keyword id="KW-0067">ATP-binding</keyword>
<keyword id="KW-0963">Cytoplasm</keyword>
<keyword id="KW-0418">Kinase</keyword>
<keyword id="KW-0547">Nucleotide-binding</keyword>
<keyword id="KW-1185">Reference proteome</keyword>
<keyword id="KW-0808">Transferase</keyword>
<accession>Q5UXH0</accession>
<reference key="1">
    <citation type="journal article" date="2004" name="Genome Res.">
        <title>Genome sequence of Haloarcula marismortui: a halophilic archaeon from the Dead Sea.</title>
        <authorList>
            <person name="Baliga N.S."/>
            <person name="Bonneau R."/>
            <person name="Facciotti M.T."/>
            <person name="Pan M."/>
            <person name="Glusman G."/>
            <person name="Deutsch E.W."/>
            <person name="Shannon P."/>
            <person name="Chiu Y."/>
            <person name="Weng R.S."/>
            <person name="Gan R.R."/>
            <person name="Hung P."/>
            <person name="Date S.V."/>
            <person name="Marcotte E."/>
            <person name="Hood L."/>
            <person name="Ng W.V."/>
        </authorList>
    </citation>
    <scope>NUCLEOTIDE SEQUENCE [LARGE SCALE GENOMIC DNA]</scope>
    <source>
        <strain>ATCC 43049 / DSM 3752 / JCM 8966 / VKM B-1809</strain>
    </source>
</reference>